<feature type="chain" id="PRO_0000224081" description="DNA-directed RNA polymerase subunit beta">
    <location>
        <begin position="1"/>
        <end position="1392"/>
    </location>
</feature>
<name>RPOB_NEIG1</name>
<comment type="function">
    <text evidence="1">DNA-dependent RNA polymerase catalyzes the transcription of DNA into RNA using the four ribonucleoside triphosphates as substrates.</text>
</comment>
<comment type="catalytic activity">
    <reaction evidence="1">
        <text>RNA(n) + a ribonucleoside 5'-triphosphate = RNA(n+1) + diphosphate</text>
        <dbReference type="Rhea" id="RHEA:21248"/>
        <dbReference type="Rhea" id="RHEA-COMP:14527"/>
        <dbReference type="Rhea" id="RHEA-COMP:17342"/>
        <dbReference type="ChEBI" id="CHEBI:33019"/>
        <dbReference type="ChEBI" id="CHEBI:61557"/>
        <dbReference type="ChEBI" id="CHEBI:140395"/>
        <dbReference type="EC" id="2.7.7.6"/>
    </reaction>
</comment>
<comment type="subunit">
    <text evidence="1">The RNAP catalytic core consists of 2 alpha, 1 beta, 1 beta' and 1 omega subunit. When a sigma factor is associated with the core the holoenzyme is formed, which can initiate transcription.</text>
</comment>
<comment type="similarity">
    <text evidence="1">Belongs to the RNA polymerase beta chain family.</text>
</comment>
<sequence>MNYSFTEKKRIRKSFAKRENVLEVPFLLATQIDSYAKFLQLENAFDKRTDDGLQAAFNSIFPIVSHNGYARLEFVYYTLGEPLFDIPECQLRGITYAAPLRARIRLVILDKEASKPTVKEVRENEVYMGEIPLMTPSGSFVINGTERVIVSQLHRSPGVFFEHDKGKTHSSGKLLFSARIIPYRGSWLDFEFDPKDLLYFRIDRRRKMPVTILLKALGYNNEQILDIFYDKETFYLSSNGVQTDLVAGRLKGETAKVDILDKEGNVLVAKGKRITAKNIRDITNAGLTRLDVEQESLLGKALAADLIDSETGEVLASANDEITEELLAKFDINGVKEITTLYINELDQGAYISNTLRTDETAGRQAARVAIYRMMRPGEPPTEEAVEQLFNRLFFSEDSYDLSRVGRMKFNTRTYEQKLSEAQQNSWYGRLLNETFAGAADKGGYVLSVEDIVASIATLVELRNGHGEVDDIDHLGNRRVRSVGELTENQFRSGLARVERAVKERLNQAESENLMPHDLINAKPVSAAIKEFFGSSQLSQFMDQTNPLSEVTHKRRVSALGPGGLTRERAGFEVRDVHPTHYGRVCPIETPEGPNIGLINSLSVYARTNDYGFLETPYRRVIDGKVTEEIDYLSAIEEGRYVIAQANADLDSDGNLIGDLVTCREKGETIMATPDRVQYMDVATGQVVSVAASLIPFLEHDDANRALMGANMQRQAVPCLRPEKPMVGTGIERSVAVDSATAIVARRGGVVEYVDANRVVIRVHDDEATAGEVGVDIYNLVKFTRSNQSTNINQRPAVKAGDVLQRGDLVADGASTDLGELALGQNMTIAFMPWNGYNYEDSILISEKVAADDRYTSIHIEELNVVARDTKLGAEDITRDIPNLSERMQNRLDESGIVYIGAEVEAGDVLVGKVTPKGETQLTPEEKLLRAIFGEKASDVKDTSLRMPTGMSGTVIDVQVFTREGIQRDKRAQSIIDSELKRYRLDLNDQLRIFDNDAFDRIERMIVGQKANGGPMKLTKGSEITTEYLAGLPSRHDWFDIRLTDEDLAKQLELIKLSLQQKREEADELYEIKKKKLTQGDELQPGVQKMVKVFIAIKRRLQAGDKMAGRHGNKGVVSRILPVEDMPYMADGRPVDIVLNPLGVPSRMNIGQILEVHLGWAAKGIGERIDRMLKERRKAGELREFLNKLYNGSGKKEDLDSLTDEEIIELASNLRKGASFASPVFDGAKESEIREMLNLAYPSEDPEVEKLGFNDSKTQITLYDGRSGEAFDRKVTVGVMHYLKLHHLVDEKMHARSTGPYSLVTQQPLGGKAQFGGQRFGEMEVWALEAYGAAYTLQEMLTVKSDDVNGRTKMYENIVKGEHKIDAGMPESFNVLVKEIRSLGLDIDLERY</sequence>
<organism>
    <name type="scientific">Neisseria gonorrhoeae (strain ATCC 700825 / FA 1090)</name>
    <dbReference type="NCBI Taxonomy" id="242231"/>
    <lineage>
        <taxon>Bacteria</taxon>
        <taxon>Pseudomonadati</taxon>
        <taxon>Pseudomonadota</taxon>
        <taxon>Betaproteobacteria</taxon>
        <taxon>Neisseriales</taxon>
        <taxon>Neisseriaceae</taxon>
        <taxon>Neisseria</taxon>
    </lineage>
</organism>
<reference key="1">
    <citation type="submission" date="2003-03" db="EMBL/GenBank/DDBJ databases">
        <title>The complete genome sequence of Neisseria gonorrhoeae.</title>
        <authorList>
            <person name="Lewis L.A."/>
            <person name="Gillaspy A.F."/>
            <person name="McLaughlin R.E."/>
            <person name="Gipson M."/>
            <person name="Ducey T.F."/>
            <person name="Ownbey T."/>
            <person name="Hartman K."/>
            <person name="Nydick C."/>
            <person name="Carson M.B."/>
            <person name="Vaughn J."/>
            <person name="Thomson C."/>
            <person name="Song L."/>
            <person name="Lin S."/>
            <person name="Yuan X."/>
            <person name="Najar F."/>
            <person name="Zhan M."/>
            <person name="Ren Q."/>
            <person name="Zhu H."/>
            <person name="Qi S."/>
            <person name="Kenton S.M."/>
            <person name="Lai H."/>
            <person name="White J.D."/>
            <person name="Clifton S."/>
            <person name="Roe B.A."/>
            <person name="Dyer D.W."/>
        </authorList>
    </citation>
    <scope>NUCLEOTIDE SEQUENCE [LARGE SCALE GENOMIC DNA]</scope>
    <source>
        <strain>ATCC 700825 / FA 1090</strain>
    </source>
</reference>
<dbReference type="EC" id="2.7.7.6" evidence="1"/>
<dbReference type="EMBL" id="AE004969">
    <property type="protein sequence ID" value="AAW90472.1"/>
    <property type="molecule type" value="Genomic_DNA"/>
</dbReference>
<dbReference type="RefSeq" id="WP_003705329.1">
    <property type="nucleotide sequence ID" value="NC_002946.2"/>
</dbReference>
<dbReference type="RefSeq" id="YP_208884.1">
    <property type="nucleotide sequence ID" value="NC_002946.2"/>
</dbReference>
<dbReference type="SMR" id="Q5F5R5"/>
<dbReference type="STRING" id="242231.NGO_1851"/>
<dbReference type="KEGG" id="ngo:NGO_1851"/>
<dbReference type="PATRIC" id="fig|242231.10.peg.2226"/>
<dbReference type="HOGENOM" id="CLU_000524_4_3_4"/>
<dbReference type="Proteomes" id="UP000000535">
    <property type="component" value="Chromosome"/>
</dbReference>
<dbReference type="GO" id="GO:0000428">
    <property type="term" value="C:DNA-directed RNA polymerase complex"/>
    <property type="evidence" value="ECO:0007669"/>
    <property type="project" value="UniProtKB-KW"/>
</dbReference>
<dbReference type="GO" id="GO:0003677">
    <property type="term" value="F:DNA binding"/>
    <property type="evidence" value="ECO:0007669"/>
    <property type="project" value="UniProtKB-UniRule"/>
</dbReference>
<dbReference type="GO" id="GO:0003899">
    <property type="term" value="F:DNA-directed RNA polymerase activity"/>
    <property type="evidence" value="ECO:0007669"/>
    <property type="project" value="UniProtKB-UniRule"/>
</dbReference>
<dbReference type="GO" id="GO:0032549">
    <property type="term" value="F:ribonucleoside binding"/>
    <property type="evidence" value="ECO:0007669"/>
    <property type="project" value="InterPro"/>
</dbReference>
<dbReference type="GO" id="GO:0071281">
    <property type="term" value="P:cellular response to iron ion"/>
    <property type="evidence" value="ECO:0000269"/>
    <property type="project" value="CollecTF"/>
</dbReference>
<dbReference type="GO" id="GO:0006351">
    <property type="term" value="P:DNA-templated transcription"/>
    <property type="evidence" value="ECO:0007669"/>
    <property type="project" value="UniProtKB-UniRule"/>
</dbReference>
<dbReference type="CDD" id="cd00653">
    <property type="entry name" value="RNA_pol_B_RPB2"/>
    <property type="match status" value="1"/>
</dbReference>
<dbReference type="FunFam" id="2.30.150.10:FF:000001">
    <property type="entry name" value="DNA-directed RNA polymerase subunit beta"/>
    <property type="match status" value="1"/>
</dbReference>
<dbReference type="FunFam" id="2.40.50.100:FF:000006">
    <property type="entry name" value="DNA-directed RNA polymerase subunit beta"/>
    <property type="match status" value="1"/>
</dbReference>
<dbReference type="FunFam" id="2.40.50.150:FF:000001">
    <property type="entry name" value="DNA-directed RNA polymerase subunit beta"/>
    <property type="match status" value="1"/>
</dbReference>
<dbReference type="FunFam" id="3.90.1110.10:FF:000001">
    <property type="entry name" value="DNA-directed RNA polymerase subunit beta"/>
    <property type="match status" value="1"/>
</dbReference>
<dbReference type="FunFam" id="3.90.1110.10:FF:000004">
    <property type="entry name" value="DNA-directed RNA polymerase subunit beta"/>
    <property type="match status" value="1"/>
</dbReference>
<dbReference type="FunFam" id="3.90.1800.10:FF:000001">
    <property type="entry name" value="DNA-directed RNA polymerase subunit beta"/>
    <property type="match status" value="1"/>
</dbReference>
<dbReference type="Gene3D" id="2.40.50.100">
    <property type="match status" value="1"/>
</dbReference>
<dbReference type="Gene3D" id="2.40.50.150">
    <property type="match status" value="1"/>
</dbReference>
<dbReference type="Gene3D" id="3.90.1100.10">
    <property type="match status" value="2"/>
</dbReference>
<dbReference type="Gene3D" id="2.30.150.10">
    <property type="entry name" value="DNA-directed RNA polymerase, beta subunit, external 1 domain"/>
    <property type="match status" value="1"/>
</dbReference>
<dbReference type="Gene3D" id="2.40.270.10">
    <property type="entry name" value="DNA-directed RNA polymerase, subunit 2, domain 6"/>
    <property type="match status" value="1"/>
</dbReference>
<dbReference type="Gene3D" id="3.90.1800.10">
    <property type="entry name" value="RNA polymerase alpha subunit dimerisation domain"/>
    <property type="match status" value="1"/>
</dbReference>
<dbReference type="Gene3D" id="3.90.1110.10">
    <property type="entry name" value="RNA polymerase Rpb2, domain 2"/>
    <property type="match status" value="1"/>
</dbReference>
<dbReference type="HAMAP" id="MF_01321">
    <property type="entry name" value="RNApol_bact_RpoB"/>
    <property type="match status" value="1"/>
</dbReference>
<dbReference type="InterPro" id="IPR042107">
    <property type="entry name" value="DNA-dir_RNA_pol_bsu_ext_1_sf"/>
</dbReference>
<dbReference type="InterPro" id="IPR019462">
    <property type="entry name" value="DNA-dir_RNA_pol_bsu_external_1"/>
</dbReference>
<dbReference type="InterPro" id="IPR015712">
    <property type="entry name" value="DNA-dir_RNA_pol_su2"/>
</dbReference>
<dbReference type="InterPro" id="IPR007120">
    <property type="entry name" value="DNA-dir_RNAP_su2_dom"/>
</dbReference>
<dbReference type="InterPro" id="IPR037033">
    <property type="entry name" value="DNA-dir_RNAP_su2_hyb_sf"/>
</dbReference>
<dbReference type="InterPro" id="IPR010243">
    <property type="entry name" value="RNA_pol_bsu_bac"/>
</dbReference>
<dbReference type="InterPro" id="IPR007121">
    <property type="entry name" value="RNA_pol_bsu_CS"/>
</dbReference>
<dbReference type="InterPro" id="IPR007644">
    <property type="entry name" value="RNA_pol_bsu_protrusion"/>
</dbReference>
<dbReference type="InterPro" id="IPR007642">
    <property type="entry name" value="RNA_pol_Rpb2_2"/>
</dbReference>
<dbReference type="InterPro" id="IPR037034">
    <property type="entry name" value="RNA_pol_Rpb2_2_sf"/>
</dbReference>
<dbReference type="InterPro" id="IPR007645">
    <property type="entry name" value="RNA_pol_Rpb2_3"/>
</dbReference>
<dbReference type="InterPro" id="IPR007641">
    <property type="entry name" value="RNA_pol_Rpb2_7"/>
</dbReference>
<dbReference type="InterPro" id="IPR014724">
    <property type="entry name" value="RNA_pol_RPB2_OB-fold"/>
</dbReference>
<dbReference type="NCBIfam" id="NF001616">
    <property type="entry name" value="PRK00405.1"/>
    <property type="match status" value="1"/>
</dbReference>
<dbReference type="NCBIfam" id="TIGR02013">
    <property type="entry name" value="rpoB"/>
    <property type="match status" value="1"/>
</dbReference>
<dbReference type="PANTHER" id="PTHR20856">
    <property type="entry name" value="DNA-DIRECTED RNA POLYMERASE I SUBUNIT 2"/>
    <property type="match status" value="1"/>
</dbReference>
<dbReference type="Pfam" id="PF04563">
    <property type="entry name" value="RNA_pol_Rpb2_1"/>
    <property type="match status" value="1"/>
</dbReference>
<dbReference type="Pfam" id="PF04561">
    <property type="entry name" value="RNA_pol_Rpb2_2"/>
    <property type="match status" value="2"/>
</dbReference>
<dbReference type="Pfam" id="PF04565">
    <property type="entry name" value="RNA_pol_Rpb2_3"/>
    <property type="match status" value="1"/>
</dbReference>
<dbReference type="Pfam" id="PF10385">
    <property type="entry name" value="RNA_pol_Rpb2_45"/>
    <property type="match status" value="1"/>
</dbReference>
<dbReference type="Pfam" id="PF00562">
    <property type="entry name" value="RNA_pol_Rpb2_6"/>
    <property type="match status" value="1"/>
</dbReference>
<dbReference type="Pfam" id="PF04560">
    <property type="entry name" value="RNA_pol_Rpb2_7"/>
    <property type="match status" value="1"/>
</dbReference>
<dbReference type="SUPFAM" id="SSF64484">
    <property type="entry name" value="beta and beta-prime subunits of DNA dependent RNA-polymerase"/>
    <property type="match status" value="1"/>
</dbReference>
<dbReference type="PROSITE" id="PS01166">
    <property type="entry name" value="RNA_POL_BETA"/>
    <property type="match status" value="1"/>
</dbReference>
<evidence type="ECO:0000255" key="1">
    <source>
        <dbReference type="HAMAP-Rule" id="MF_01321"/>
    </source>
</evidence>
<accession>Q5F5R5</accession>
<protein>
    <recommendedName>
        <fullName evidence="1">DNA-directed RNA polymerase subunit beta</fullName>
        <shortName evidence="1">RNAP subunit beta</shortName>
        <ecNumber evidence="1">2.7.7.6</ecNumber>
    </recommendedName>
    <alternativeName>
        <fullName evidence="1">RNA polymerase subunit beta</fullName>
    </alternativeName>
    <alternativeName>
        <fullName evidence="1">Transcriptase subunit beta</fullName>
    </alternativeName>
</protein>
<proteinExistence type="inferred from homology"/>
<gene>
    <name evidence="1" type="primary">rpoB</name>
    <name type="ordered locus">NGO_1851</name>
</gene>
<keyword id="KW-0240">DNA-directed RNA polymerase</keyword>
<keyword id="KW-0548">Nucleotidyltransferase</keyword>
<keyword id="KW-1185">Reference proteome</keyword>
<keyword id="KW-0804">Transcription</keyword>
<keyword id="KW-0808">Transferase</keyword>